<keyword id="KW-1074">Activation of host NF-kappa-B by virus</keyword>
<keyword id="KW-0010">Activator</keyword>
<keyword id="KW-0053">Apoptosis</keyword>
<keyword id="KW-1035">Host cytoplasm</keyword>
<keyword id="KW-1079">Host G2/M cell cycle arrest by virus</keyword>
<keyword id="KW-1045">Host mitochondrion</keyword>
<keyword id="KW-1048">Host nucleus</keyword>
<keyword id="KW-0945">Host-virus interaction</keyword>
<keyword id="KW-1121">Modulation of host cell cycle by virus</keyword>
<keyword id="KW-0804">Transcription</keyword>
<keyword id="KW-0805">Transcription regulation</keyword>
<accession>Q69604</accession>
<sequence>MAARLCCQLDPARDVLCLRPVSAESCGRPVSGSLGDLSSPSPSAVPADHGAHLSLRGLPVCAFSSAGPCALRFTSARRMETTVNAHQILPKVLHKRTLGLSAMSTTDLEAYFKDCLFKDWEELGEEIRLKVFVLGGCRHKLVCAPAPCNFFTSA</sequence>
<proteinExistence type="inferred from homology"/>
<dbReference type="EMBL" id="AB205129">
    <property type="protein sequence ID" value="BAD90097.1"/>
    <property type="molecule type" value="Genomic_DNA"/>
</dbReference>
<dbReference type="EMBL" id="X75664">
    <property type="protein sequence ID" value="CAA53356.1"/>
    <property type="molecule type" value="Genomic_DNA"/>
</dbReference>
<dbReference type="EMBL" id="EU239221">
    <property type="protein sequence ID" value="ABX56890.1"/>
    <property type="molecule type" value="Genomic_DNA"/>
</dbReference>
<dbReference type="SMR" id="Q69604"/>
<dbReference type="Proteomes" id="UP000008538">
    <property type="component" value="Genome"/>
</dbReference>
<dbReference type="Proteomes" id="UP000158179">
    <property type="component" value="Genome"/>
</dbReference>
<dbReference type="Proteomes" id="UP000161266">
    <property type="component" value="Genome"/>
</dbReference>
<dbReference type="GO" id="GO:0033650">
    <property type="term" value="C:host cell mitochondrion"/>
    <property type="evidence" value="ECO:0007669"/>
    <property type="project" value="UniProtKB-SubCell"/>
</dbReference>
<dbReference type="GO" id="GO:0042025">
    <property type="term" value="C:host cell nucleus"/>
    <property type="evidence" value="ECO:0007669"/>
    <property type="project" value="UniProtKB-SubCell"/>
</dbReference>
<dbReference type="GO" id="GO:0006351">
    <property type="term" value="P:DNA-templated transcription"/>
    <property type="evidence" value="ECO:0007669"/>
    <property type="project" value="UniProtKB-UniRule"/>
</dbReference>
<dbReference type="GO" id="GO:0085033">
    <property type="term" value="P:symbiont-mediated activation of host NF-kappaB cascade"/>
    <property type="evidence" value="ECO:0007669"/>
    <property type="project" value="UniProtKB-UniRule"/>
</dbReference>
<dbReference type="GO" id="GO:0039592">
    <property type="term" value="P:symbiont-mediated arrest of host cell cycle during G2/M transition"/>
    <property type="evidence" value="ECO:0007669"/>
    <property type="project" value="UniProtKB-UniRule"/>
</dbReference>
<dbReference type="GO" id="GO:0019079">
    <property type="term" value="P:viral genome replication"/>
    <property type="evidence" value="ECO:0007669"/>
    <property type="project" value="UniProtKB-UniRule"/>
</dbReference>
<dbReference type="HAMAP" id="MF_04074">
    <property type="entry name" value="HBV_X"/>
    <property type="match status" value="1"/>
</dbReference>
<dbReference type="InterPro" id="IPR000236">
    <property type="entry name" value="Transactivation_prot_X"/>
</dbReference>
<dbReference type="Pfam" id="PF00739">
    <property type="entry name" value="X"/>
    <property type="match status" value="1"/>
</dbReference>
<feature type="chain" id="PRO_0000319914" description="Protein X">
    <location>
        <begin position="1"/>
        <end position="154"/>
    </location>
</feature>
<feature type="region of interest" description="Mitochondrial targeting sequence" evidence="1">
    <location>
        <begin position="68"/>
        <end position="117"/>
    </location>
</feature>
<organism>
    <name type="scientific">Hepatitis B virus genotype E subtype ayw4 (isolate Kou)</name>
    <name type="common">HBV-E</name>
    <dbReference type="NCBI Taxonomy" id="489495"/>
    <lineage>
        <taxon>Viruses</taxon>
        <taxon>Riboviria</taxon>
        <taxon>Pararnavirae</taxon>
        <taxon>Artverviricota</taxon>
        <taxon>Revtraviricetes</taxon>
        <taxon>Blubervirales</taxon>
        <taxon>Hepadnaviridae</taxon>
        <taxon>Orthohepadnavirus</taxon>
        <taxon>Hepatitis B virus</taxon>
        <taxon>hepatitis B virus genotype E</taxon>
    </lineage>
</organism>
<gene>
    <name evidence="1" type="primary">X</name>
</gene>
<reference key="1">
    <citation type="journal article" date="1994" name="Virology">
        <title>Complete genomes, phylogenetic relatedness, and structural proteins of six strains of the hepatitis B virus, four of which represent two new genotypes.</title>
        <authorList>
            <person name="Norder H."/>
            <person name="Courouce A.M."/>
            <person name="Magnius L.O."/>
        </authorList>
    </citation>
    <scope>NUCLEOTIDE SEQUENCE [GENOMIC DNA]</scope>
</reference>
<reference key="2">
    <citation type="journal article" date="2008" name="J. Gen. Virol.">
        <title>Molecular characterization of occult hepatitis B virus in genotype E-infected subjects.</title>
        <authorList>
            <person name="Zahn A."/>
            <person name="Li C."/>
            <person name="Danso K."/>
            <person name="Candotti D."/>
            <person name="Owusu-Ofori S."/>
            <person name="Temple J."/>
            <person name="Allain J.P."/>
        </authorList>
    </citation>
    <scope>NUCLEOTIDE SEQUENCE [GENOMIC DNA]</scope>
</reference>
<reference key="3">
    <citation type="journal article" date="2004" name="J. Virol.">
        <title>The enigmatic X gene of hepatitis B virus.</title>
        <authorList>
            <person name="Bouchard M.J."/>
            <person name="Schneider R.J."/>
        </authorList>
    </citation>
    <scope>REVIEW</scope>
</reference>
<reference key="4">
    <citation type="journal article" date="2006" name="Cancer Sci.">
        <title>Molecular functions and biological roles of hepatitis B virus x protein.</title>
        <authorList>
            <person name="Tang H."/>
            <person name="Oishi N."/>
            <person name="Kaneko S."/>
            <person name="Murakami S."/>
        </authorList>
    </citation>
    <scope>REVIEW</scope>
</reference>
<protein>
    <recommendedName>
        <fullName evidence="1">Protein X</fullName>
    </recommendedName>
    <alternativeName>
        <fullName evidence="1">HBx</fullName>
    </alternativeName>
    <alternativeName>
        <fullName evidence="1">Peptide X</fullName>
    </alternativeName>
    <alternativeName>
        <fullName evidence="1">pX</fullName>
    </alternativeName>
</protein>
<organismHost>
    <name type="scientific">Homo sapiens</name>
    <name type="common">Human</name>
    <dbReference type="NCBI Taxonomy" id="9606"/>
</organismHost>
<organismHost>
    <name type="scientific">Pan troglodytes</name>
    <name type="common">Chimpanzee</name>
    <dbReference type="NCBI Taxonomy" id="9598"/>
</organismHost>
<evidence type="ECO:0000255" key="1">
    <source>
        <dbReference type="HAMAP-Rule" id="MF_04074"/>
    </source>
</evidence>
<comment type="function">
    <text evidence="1">Multifunctional protein that plays a role in silencing host antiviral defenses and promoting viral transcription. Does not seem to be essential for HBV infection. May be directly involved in development of cirrhosis and liver cancer (hepatocellular carcinoma). Most of cytosolic activities involve modulation of cytosolic calcium. The effect on apoptosis is controversial depending on the cell types in which the studies have been conducted. May induce apoptosis by localizing in mitochondria and causing loss of mitochondrial membrane potential. May also modulate apoptosis by binding host CFLAR, a key regulator of the death-inducing signaling complex (DISC). Promotes viral transcription by using the host E3 ubiquitin ligase DDB1 to target the SMC5-SMC6 complex to proteasomal degradation. This host complex would otherwise bind to viral episomal DNA, and prevents its transcription. Moderately stimulates transcription of many different viral and cellular transcription elements. Promoters and enhancers stimulated by HBx contain DNA binding sites for NF-kappa-B, AP-1, AP-2, c-EBP, ATF/CREB, or the calcium-activated factor NF-AT.</text>
</comment>
<comment type="subunit">
    <text evidence="1">May form homodimer. May interact with host CEBPA, CFLAR, CREB1, DDB1, E4F1, HBXIP, HSPD1/HSP60, NFKBIA, POLR2E and SMAD4. Interacts with host SMC5-SMC6 complex and induces its degradation. Interacts with host TRPC4AP; leading to prevent ubiquitination of TRPC4AP. Interacts with host PLSCR1; this interaction promotes ubiquitination and degradation of HBx and impairs HBx-mediated cell proliferation.</text>
</comment>
<comment type="subcellular location">
    <subcellularLocation>
        <location evidence="1">Host cytoplasm</location>
    </subcellularLocation>
    <subcellularLocation>
        <location evidence="1">Host nucleus</location>
    </subcellularLocation>
    <subcellularLocation>
        <location evidence="1">Host mitochondrion</location>
    </subcellularLocation>
    <text evidence="1">Mainly cytoplasmic as only a fraction is detected in the nucleus. In cytoplasm, a minor fraction associates with mitochondria or proteasomes.</text>
</comment>
<comment type="PTM">
    <text evidence="1">A fraction may be phosphorylated in insect cells and HepG2 cells, a human hepatoblastoma cell line. Phosphorylated in vitro by host protein kinase C or mitogen-activated protein kinase. N-acetylated in insect cells.</text>
</comment>
<comment type="similarity">
    <text evidence="1">Belongs to the orthohepadnavirus protein X family.</text>
</comment>
<comment type="caution">
    <text>Transcriptional activities should be taken with a grain of salt. As of 2007, all studies demonstrating in vivo interaction between protein X and transcriptional components were performed with significant overexpression of both proteins and in the absence of viral infection.</text>
</comment>
<name>X_HBVE1</name>